<sequence>MSNIKIAGIGAYLPSLVVTNDRISEFVETSDEWIVQRTGMRERRISEGENTSDISTKAAKLALERAGIDAKDLELIIVATISPDMFIPSVACLVQSNLDASKAACFDISVACSGFVYGLETAKALMMSMNYKNALVVGAEVLSKVTDWTDRSTCILFGDGAGAAVLKRDEAPGIIKSYLRADGKKGEALTIGATDFDTPFSKEKKLAKRTIDMNGREILRFAVSAIDEAVTEVMKDTNVSFDDIKYIVPHQANYRIIKLAAEKLKLSEDKFYLNLEKVGNTSAATVPIALNEMYEKGLLNKGDKIILVAFGGGLTYAATLLEW</sequence>
<reference key="1">
    <citation type="submission" date="2007-06" db="EMBL/GenBank/DDBJ databases">
        <title>Complete sequence of Clostridium beijerinckii NCIMB 8052.</title>
        <authorList>
            <consortium name="US DOE Joint Genome Institute"/>
            <person name="Copeland A."/>
            <person name="Lucas S."/>
            <person name="Lapidus A."/>
            <person name="Barry K."/>
            <person name="Detter J.C."/>
            <person name="Glavina del Rio T."/>
            <person name="Hammon N."/>
            <person name="Israni S."/>
            <person name="Dalin E."/>
            <person name="Tice H."/>
            <person name="Pitluck S."/>
            <person name="Sims D."/>
            <person name="Brettin T."/>
            <person name="Bruce D."/>
            <person name="Tapia R."/>
            <person name="Brainard J."/>
            <person name="Schmutz J."/>
            <person name="Larimer F."/>
            <person name="Land M."/>
            <person name="Hauser L."/>
            <person name="Kyrpides N."/>
            <person name="Mikhailova N."/>
            <person name="Bennet G."/>
            <person name="Cann I."/>
            <person name="Chen J.-S."/>
            <person name="Contreras A.L."/>
            <person name="Jones D."/>
            <person name="Kashket E."/>
            <person name="Mitchell W."/>
            <person name="Stoddard S."/>
            <person name="Schwarz W."/>
            <person name="Qureshi N."/>
            <person name="Young M."/>
            <person name="Shi Z."/>
            <person name="Ezeji T."/>
            <person name="White B."/>
            <person name="Blaschek H."/>
            <person name="Richardson P."/>
        </authorList>
    </citation>
    <scope>NUCLEOTIDE SEQUENCE [LARGE SCALE GENOMIC DNA]</scope>
    <source>
        <strain>ATCC 51743 / NCIMB 8052</strain>
    </source>
</reference>
<accession>A6LSC2</accession>
<comment type="function">
    <text evidence="1">Catalyzes the condensation reaction of fatty acid synthesis by the addition to an acyl acceptor of two carbons from malonyl-ACP. Catalyzes the first condensation reaction which initiates fatty acid synthesis and may therefore play a role in governing the total rate of fatty acid production. Possesses both acetoacetyl-ACP synthase and acetyl transacylase activities. Its substrate specificity determines the biosynthesis of branched-chain and/or straight-chain of fatty acids.</text>
</comment>
<comment type="catalytic activity">
    <reaction evidence="1">
        <text>malonyl-[ACP] + acetyl-CoA + H(+) = 3-oxobutanoyl-[ACP] + CO2 + CoA</text>
        <dbReference type="Rhea" id="RHEA:12080"/>
        <dbReference type="Rhea" id="RHEA-COMP:9623"/>
        <dbReference type="Rhea" id="RHEA-COMP:9625"/>
        <dbReference type="ChEBI" id="CHEBI:15378"/>
        <dbReference type="ChEBI" id="CHEBI:16526"/>
        <dbReference type="ChEBI" id="CHEBI:57287"/>
        <dbReference type="ChEBI" id="CHEBI:57288"/>
        <dbReference type="ChEBI" id="CHEBI:78449"/>
        <dbReference type="ChEBI" id="CHEBI:78450"/>
        <dbReference type="EC" id="2.3.1.180"/>
    </reaction>
</comment>
<comment type="pathway">
    <text evidence="1">Lipid metabolism; fatty acid biosynthesis.</text>
</comment>
<comment type="subunit">
    <text evidence="1">Homodimer.</text>
</comment>
<comment type="subcellular location">
    <subcellularLocation>
        <location evidence="1">Cytoplasm</location>
    </subcellularLocation>
</comment>
<comment type="domain">
    <text evidence="1">The last Arg residue of the ACP-binding site is essential for the weak association between ACP/AcpP and FabH.</text>
</comment>
<comment type="similarity">
    <text evidence="1">Belongs to the thiolase-like superfamily. FabH family.</text>
</comment>
<keyword id="KW-0012">Acyltransferase</keyword>
<keyword id="KW-0963">Cytoplasm</keyword>
<keyword id="KW-0275">Fatty acid biosynthesis</keyword>
<keyword id="KW-0276">Fatty acid metabolism</keyword>
<keyword id="KW-0444">Lipid biosynthesis</keyword>
<keyword id="KW-0443">Lipid metabolism</keyword>
<keyword id="KW-0511">Multifunctional enzyme</keyword>
<keyword id="KW-0808">Transferase</keyword>
<gene>
    <name evidence="1" type="primary">fabH</name>
    <name type="ordered locus">Cbei_1068</name>
</gene>
<name>FABH_CLOB8</name>
<proteinExistence type="inferred from homology"/>
<dbReference type="EC" id="2.3.1.180" evidence="1"/>
<dbReference type="EMBL" id="CP000721">
    <property type="protein sequence ID" value="ABR33252.1"/>
    <property type="molecule type" value="Genomic_DNA"/>
</dbReference>
<dbReference type="RefSeq" id="WP_011968411.1">
    <property type="nucleotide sequence ID" value="NC_009617.1"/>
</dbReference>
<dbReference type="SMR" id="A6LSC2"/>
<dbReference type="KEGG" id="cbe:Cbei_1068"/>
<dbReference type="eggNOG" id="COG0332">
    <property type="taxonomic scope" value="Bacteria"/>
</dbReference>
<dbReference type="HOGENOM" id="CLU_039592_3_1_9"/>
<dbReference type="UniPathway" id="UPA00094"/>
<dbReference type="Proteomes" id="UP000000565">
    <property type="component" value="Chromosome"/>
</dbReference>
<dbReference type="GO" id="GO:0005737">
    <property type="term" value="C:cytoplasm"/>
    <property type="evidence" value="ECO:0007669"/>
    <property type="project" value="UniProtKB-SubCell"/>
</dbReference>
<dbReference type="GO" id="GO:0004315">
    <property type="term" value="F:3-oxoacyl-[acyl-carrier-protein] synthase activity"/>
    <property type="evidence" value="ECO:0007669"/>
    <property type="project" value="InterPro"/>
</dbReference>
<dbReference type="GO" id="GO:0033818">
    <property type="term" value="F:beta-ketoacyl-acyl-carrier-protein synthase III activity"/>
    <property type="evidence" value="ECO:0007669"/>
    <property type="project" value="UniProtKB-UniRule"/>
</dbReference>
<dbReference type="GO" id="GO:0006633">
    <property type="term" value="P:fatty acid biosynthetic process"/>
    <property type="evidence" value="ECO:0007669"/>
    <property type="project" value="UniProtKB-UniRule"/>
</dbReference>
<dbReference type="GO" id="GO:0044550">
    <property type="term" value="P:secondary metabolite biosynthetic process"/>
    <property type="evidence" value="ECO:0007669"/>
    <property type="project" value="TreeGrafter"/>
</dbReference>
<dbReference type="CDD" id="cd00830">
    <property type="entry name" value="KAS_III"/>
    <property type="match status" value="1"/>
</dbReference>
<dbReference type="FunFam" id="3.40.47.10:FF:000004">
    <property type="entry name" value="3-oxoacyl-[acyl-carrier-protein] synthase 3"/>
    <property type="match status" value="1"/>
</dbReference>
<dbReference type="Gene3D" id="3.40.47.10">
    <property type="match status" value="1"/>
</dbReference>
<dbReference type="HAMAP" id="MF_01815">
    <property type="entry name" value="FabH"/>
    <property type="match status" value="1"/>
</dbReference>
<dbReference type="InterPro" id="IPR013747">
    <property type="entry name" value="ACP_syn_III_C"/>
</dbReference>
<dbReference type="InterPro" id="IPR013751">
    <property type="entry name" value="ACP_syn_III_N"/>
</dbReference>
<dbReference type="InterPro" id="IPR004655">
    <property type="entry name" value="FabH"/>
</dbReference>
<dbReference type="InterPro" id="IPR016039">
    <property type="entry name" value="Thiolase-like"/>
</dbReference>
<dbReference type="NCBIfam" id="TIGR00747">
    <property type="entry name" value="fabH"/>
    <property type="match status" value="1"/>
</dbReference>
<dbReference type="NCBIfam" id="NF006829">
    <property type="entry name" value="PRK09352.1"/>
    <property type="match status" value="1"/>
</dbReference>
<dbReference type="PANTHER" id="PTHR34069">
    <property type="entry name" value="3-OXOACYL-[ACYL-CARRIER-PROTEIN] SYNTHASE 3"/>
    <property type="match status" value="1"/>
</dbReference>
<dbReference type="PANTHER" id="PTHR34069:SF2">
    <property type="entry name" value="BETA-KETOACYL-[ACYL-CARRIER-PROTEIN] SYNTHASE III"/>
    <property type="match status" value="1"/>
</dbReference>
<dbReference type="Pfam" id="PF08545">
    <property type="entry name" value="ACP_syn_III"/>
    <property type="match status" value="1"/>
</dbReference>
<dbReference type="Pfam" id="PF08541">
    <property type="entry name" value="ACP_syn_III_C"/>
    <property type="match status" value="1"/>
</dbReference>
<dbReference type="SUPFAM" id="SSF53901">
    <property type="entry name" value="Thiolase-like"/>
    <property type="match status" value="1"/>
</dbReference>
<organism>
    <name type="scientific">Clostridium beijerinckii (strain ATCC 51743 / NCIMB 8052)</name>
    <name type="common">Clostridium acetobutylicum</name>
    <dbReference type="NCBI Taxonomy" id="290402"/>
    <lineage>
        <taxon>Bacteria</taxon>
        <taxon>Bacillati</taxon>
        <taxon>Bacillota</taxon>
        <taxon>Clostridia</taxon>
        <taxon>Eubacteriales</taxon>
        <taxon>Clostridiaceae</taxon>
        <taxon>Clostridium</taxon>
    </lineage>
</organism>
<feature type="chain" id="PRO_1000088306" description="Beta-ketoacyl-[acyl-carrier-protein] synthase III">
    <location>
        <begin position="1"/>
        <end position="323"/>
    </location>
</feature>
<feature type="region of interest" description="ACP-binding" evidence="1">
    <location>
        <begin position="251"/>
        <end position="255"/>
    </location>
</feature>
<feature type="active site" evidence="1">
    <location>
        <position position="112"/>
    </location>
</feature>
<feature type="active site" evidence="1">
    <location>
        <position position="250"/>
    </location>
</feature>
<feature type="active site" evidence="1">
    <location>
        <position position="280"/>
    </location>
</feature>
<protein>
    <recommendedName>
        <fullName evidence="1">Beta-ketoacyl-[acyl-carrier-protein] synthase III</fullName>
        <shortName evidence="1">Beta-ketoacyl-ACP synthase III</shortName>
        <shortName evidence="1">KAS III</shortName>
        <ecNumber evidence="1">2.3.1.180</ecNumber>
    </recommendedName>
    <alternativeName>
        <fullName evidence="1">3-oxoacyl-[acyl-carrier-protein] synthase 3</fullName>
    </alternativeName>
    <alternativeName>
        <fullName evidence="1">3-oxoacyl-[acyl-carrier-protein] synthase III</fullName>
    </alternativeName>
</protein>
<evidence type="ECO:0000255" key="1">
    <source>
        <dbReference type="HAMAP-Rule" id="MF_01815"/>
    </source>
</evidence>